<proteinExistence type="inferred from homology"/>
<reference key="1">
    <citation type="journal article" date="2008" name="J. Bacteriol.">
        <title>Complete genome sequence of uropathogenic Proteus mirabilis, a master of both adherence and motility.</title>
        <authorList>
            <person name="Pearson M.M."/>
            <person name="Sebaihia M."/>
            <person name="Churcher C."/>
            <person name="Quail M.A."/>
            <person name="Seshasayee A.S."/>
            <person name="Luscombe N.M."/>
            <person name="Abdellah Z."/>
            <person name="Arrosmith C."/>
            <person name="Atkin B."/>
            <person name="Chillingworth T."/>
            <person name="Hauser H."/>
            <person name="Jagels K."/>
            <person name="Moule S."/>
            <person name="Mungall K."/>
            <person name="Norbertczak H."/>
            <person name="Rabbinowitsch E."/>
            <person name="Walker D."/>
            <person name="Whithead S."/>
            <person name="Thomson N.R."/>
            <person name="Rather P.N."/>
            <person name="Parkhill J."/>
            <person name="Mobley H.L.T."/>
        </authorList>
    </citation>
    <scope>NUCLEOTIDE SEQUENCE [LARGE SCALE GENOMIC DNA]</scope>
    <source>
        <strain>HI4320</strain>
    </source>
</reference>
<sequence>MALIEKMTKDIQQKGGLIVSCQPVDNSPMDKPDIVAAMAQAAVNAGAVAVRIEGIDNLKATRPLIDVPIIGIVKRDLPDSPVRITPWLNDIEALAAAGADIIAFDGTDRLRPVPVKALLEHVHRLGKLAMADCATFNEGMYCHQLGTEFIGSTMSGYTGGEIPKLPDLQLVTALAEQGCRVIAEGRYNTPMMAARGMQAGAWAVTVGSALTRLEHVCEWFTQALKWQQELDK</sequence>
<protein>
    <recommendedName>
        <fullName evidence="1">Putative N-acetylmannosamine-6-phosphate 2-epimerase</fullName>
        <ecNumber evidence="1">5.1.3.9</ecNumber>
    </recommendedName>
    <alternativeName>
        <fullName evidence="1">ManNAc-6-P epimerase</fullName>
    </alternativeName>
</protein>
<gene>
    <name evidence="1" type="primary">nanE</name>
    <name type="ordered locus">PMI2978</name>
</gene>
<feature type="chain" id="PRO_1000139713" description="Putative N-acetylmannosamine-6-phosphate 2-epimerase">
    <location>
        <begin position="1"/>
        <end position="232"/>
    </location>
</feature>
<organism>
    <name type="scientific">Proteus mirabilis (strain HI4320)</name>
    <dbReference type="NCBI Taxonomy" id="529507"/>
    <lineage>
        <taxon>Bacteria</taxon>
        <taxon>Pseudomonadati</taxon>
        <taxon>Pseudomonadota</taxon>
        <taxon>Gammaproteobacteria</taxon>
        <taxon>Enterobacterales</taxon>
        <taxon>Morganellaceae</taxon>
        <taxon>Proteus</taxon>
    </lineage>
</organism>
<name>NANE_PROMH</name>
<comment type="function">
    <text evidence="1">Converts N-acetylmannosamine-6-phosphate (ManNAc-6-P) to N-acetylglucosamine-6-phosphate (GlcNAc-6-P).</text>
</comment>
<comment type="catalytic activity">
    <reaction evidence="1">
        <text>an N-acyl-D-glucosamine 6-phosphate = an N-acyl-D-mannosamine 6-phosphate</text>
        <dbReference type="Rhea" id="RHEA:23932"/>
        <dbReference type="ChEBI" id="CHEBI:57599"/>
        <dbReference type="ChEBI" id="CHEBI:57666"/>
        <dbReference type="EC" id="5.1.3.9"/>
    </reaction>
</comment>
<comment type="pathway">
    <text evidence="1">Amino-sugar metabolism; N-acetylneuraminate degradation; D-fructose 6-phosphate from N-acetylneuraminate: step 3/5.</text>
</comment>
<comment type="similarity">
    <text evidence="1">Belongs to the NanE family.</text>
</comment>
<dbReference type="EC" id="5.1.3.9" evidence="1"/>
<dbReference type="EMBL" id="AM942759">
    <property type="protein sequence ID" value="CAR45859.1"/>
    <property type="molecule type" value="Genomic_DNA"/>
</dbReference>
<dbReference type="RefSeq" id="WP_012368574.1">
    <property type="nucleotide sequence ID" value="NC_010554.1"/>
</dbReference>
<dbReference type="SMR" id="B4EZY9"/>
<dbReference type="EnsemblBacteria" id="CAR45859">
    <property type="protein sequence ID" value="CAR45859"/>
    <property type="gene ID" value="PMI2978"/>
</dbReference>
<dbReference type="GeneID" id="6801577"/>
<dbReference type="KEGG" id="pmr:PMI2978"/>
<dbReference type="PATRIC" id="fig|529507.6.peg.2909"/>
<dbReference type="eggNOG" id="COG3010">
    <property type="taxonomic scope" value="Bacteria"/>
</dbReference>
<dbReference type="HOGENOM" id="CLU_086300_0_0_6"/>
<dbReference type="UniPathway" id="UPA00629">
    <property type="reaction ID" value="UER00682"/>
</dbReference>
<dbReference type="Proteomes" id="UP000008319">
    <property type="component" value="Chromosome"/>
</dbReference>
<dbReference type="GO" id="GO:0005829">
    <property type="term" value="C:cytosol"/>
    <property type="evidence" value="ECO:0007669"/>
    <property type="project" value="TreeGrafter"/>
</dbReference>
<dbReference type="GO" id="GO:0047465">
    <property type="term" value="F:N-acylglucosamine-6-phosphate 2-epimerase activity"/>
    <property type="evidence" value="ECO:0007669"/>
    <property type="project" value="UniProtKB-EC"/>
</dbReference>
<dbReference type="GO" id="GO:0005975">
    <property type="term" value="P:carbohydrate metabolic process"/>
    <property type="evidence" value="ECO:0007669"/>
    <property type="project" value="UniProtKB-UniRule"/>
</dbReference>
<dbReference type="GO" id="GO:0006053">
    <property type="term" value="P:N-acetylmannosamine catabolic process"/>
    <property type="evidence" value="ECO:0007669"/>
    <property type="project" value="TreeGrafter"/>
</dbReference>
<dbReference type="GO" id="GO:0019262">
    <property type="term" value="P:N-acetylneuraminate catabolic process"/>
    <property type="evidence" value="ECO:0007669"/>
    <property type="project" value="UniProtKB-UniRule"/>
</dbReference>
<dbReference type="CDD" id="cd04729">
    <property type="entry name" value="NanE"/>
    <property type="match status" value="1"/>
</dbReference>
<dbReference type="FunFam" id="3.20.20.70:FF:000035">
    <property type="entry name" value="Putative N-acetylmannosamine-6-phosphate 2-epimerase"/>
    <property type="match status" value="1"/>
</dbReference>
<dbReference type="Gene3D" id="3.20.20.70">
    <property type="entry name" value="Aldolase class I"/>
    <property type="match status" value="1"/>
</dbReference>
<dbReference type="HAMAP" id="MF_01235">
    <property type="entry name" value="ManNAc6P_epimer"/>
    <property type="match status" value="1"/>
</dbReference>
<dbReference type="InterPro" id="IPR013785">
    <property type="entry name" value="Aldolase_TIM"/>
</dbReference>
<dbReference type="InterPro" id="IPR007260">
    <property type="entry name" value="NanE"/>
</dbReference>
<dbReference type="InterPro" id="IPR011060">
    <property type="entry name" value="RibuloseP-bd_barrel"/>
</dbReference>
<dbReference type="NCBIfam" id="NF002231">
    <property type="entry name" value="PRK01130.1"/>
    <property type="match status" value="1"/>
</dbReference>
<dbReference type="PANTHER" id="PTHR36204">
    <property type="entry name" value="N-ACETYLMANNOSAMINE-6-PHOSPHATE 2-EPIMERASE-RELATED"/>
    <property type="match status" value="1"/>
</dbReference>
<dbReference type="PANTHER" id="PTHR36204:SF1">
    <property type="entry name" value="N-ACETYLMANNOSAMINE-6-PHOSPHATE 2-EPIMERASE-RELATED"/>
    <property type="match status" value="1"/>
</dbReference>
<dbReference type="Pfam" id="PF04131">
    <property type="entry name" value="NanE"/>
    <property type="match status" value="1"/>
</dbReference>
<dbReference type="SUPFAM" id="SSF51366">
    <property type="entry name" value="Ribulose-phoshate binding barrel"/>
    <property type="match status" value="1"/>
</dbReference>
<evidence type="ECO:0000255" key="1">
    <source>
        <dbReference type="HAMAP-Rule" id="MF_01235"/>
    </source>
</evidence>
<keyword id="KW-0119">Carbohydrate metabolism</keyword>
<keyword id="KW-0413">Isomerase</keyword>
<keyword id="KW-1185">Reference proteome</keyword>
<accession>B4EZY9</accession>